<name>RL18_THESQ</name>
<accession>B1LBM4</accession>
<organism>
    <name type="scientific">Thermotoga sp. (strain RQ2)</name>
    <dbReference type="NCBI Taxonomy" id="126740"/>
    <lineage>
        <taxon>Bacteria</taxon>
        <taxon>Thermotogati</taxon>
        <taxon>Thermotogota</taxon>
        <taxon>Thermotogae</taxon>
        <taxon>Thermotogales</taxon>
        <taxon>Thermotogaceae</taxon>
        <taxon>Thermotoga</taxon>
    </lineage>
</organism>
<protein>
    <recommendedName>
        <fullName evidence="1">Large ribosomal subunit protein uL18</fullName>
    </recommendedName>
    <alternativeName>
        <fullName evidence="2">50S ribosomal protein L18</fullName>
    </alternativeName>
</protein>
<feature type="chain" id="PRO_1000142733" description="Large ribosomal subunit protein uL18">
    <location>
        <begin position="1"/>
        <end position="122"/>
    </location>
</feature>
<keyword id="KW-0687">Ribonucleoprotein</keyword>
<keyword id="KW-0689">Ribosomal protein</keyword>
<keyword id="KW-0694">RNA-binding</keyword>
<keyword id="KW-0699">rRNA-binding</keyword>
<comment type="function">
    <text evidence="1">This is one of the proteins that bind and probably mediate the attachment of the 5S RNA into the large ribosomal subunit, where it forms part of the central protuberance.</text>
</comment>
<comment type="subunit">
    <text evidence="1">Part of the 50S ribosomal subunit; part of the 5S rRNA/L5/L18/L25 subcomplex. Contacts the 5S and 23S rRNAs.</text>
</comment>
<comment type="similarity">
    <text evidence="1">Belongs to the universal ribosomal protein uL18 family.</text>
</comment>
<evidence type="ECO:0000255" key="1">
    <source>
        <dbReference type="HAMAP-Rule" id="MF_01337"/>
    </source>
</evidence>
<evidence type="ECO:0000305" key="2"/>
<dbReference type="EMBL" id="CP000969">
    <property type="protein sequence ID" value="ACB09722.1"/>
    <property type="molecule type" value="Genomic_DNA"/>
</dbReference>
<dbReference type="RefSeq" id="WP_004081803.1">
    <property type="nucleotide sequence ID" value="NC_010483.1"/>
</dbReference>
<dbReference type="SMR" id="B1LBM4"/>
<dbReference type="KEGG" id="trq:TRQ2_1378"/>
<dbReference type="HOGENOM" id="CLU_098841_0_1_0"/>
<dbReference type="Proteomes" id="UP000001687">
    <property type="component" value="Chromosome"/>
</dbReference>
<dbReference type="GO" id="GO:0022625">
    <property type="term" value="C:cytosolic large ribosomal subunit"/>
    <property type="evidence" value="ECO:0007669"/>
    <property type="project" value="TreeGrafter"/>
</dbReference>
<dbReference type="GO" id="GO:0008097">
    <property type="term" value="F:5S rRNA binding"/>
    <property type="evidence" value="ECO:0007669"/>
    <property type="project" value="TreeGrafter"/>
</dbReference>
<dbReference type="GO" id="GO:0003735">
    <property type="term" value="F:structural constituent of ribosome"/>
    <property type="evidence" value="ECO:0007669"/>
    <property type="project" value="InterPro"/>
</dbReference>
<dbReference type="GO" id="GO:0006412">
    <property type="term" value="P:translation"/>
    <property type="evidence" value="ECO:0007669"/>
    <property type="project" value="UniProtKB-UniRule"/>
</dbReference>
<dbReference type="CDD" id="cd00432">
    <property type="entry name" value="Ribosomal_L18_L5e"/>
    <property type="match status" value="1"/>
</dbReference>
<dbReference type="FunFam" id="3.30.420.100:FF:000001">
    <property type="entry name" value="50S ribosomal protein L18"/>
    <property type="match status" value="1"/>
</dbReference>
<dbReference type="Gene3D" id="3.30.420.100">
    <property type="match status" value="1"/>
</dbReference>
<dbReference type="HAMAP" id="MF_01337_B">
    <property type="entry name" value="Ribosomal_uL18_B"/>
    <property type="match status" value="1"/>
</dbReference>
<dbReference type="InterPro" id="IPR004389">
    <property type="entry name" value="Ribosomal_uL18_bac-type"/>
</dbReference>
<dbReference type="InterPro" id="IPR005484">
    <property type="entry name" value="Ribosomal_uL18_bac/euk"/>
</dbReference>
<dbReference type="NCBIfam" id="TIGR00060">
    <property type="entry name" value="L18_bact"/>
    <property type="match status" value="1"/>
</dbReference>
<dbReference type="PANTHER" id="PTHR12899">
    <property type="entry name" value="39S RIBOSOMAL PROTEIN L18, MITOCHONDRIAL"/>
    <property type="match status" value="1"/>
</dbReference>
<dbReference type="PANTHER" id="PTHR12899:SF3">
    <property type="entry name" value="LARGE RIBOSOMAL SUBUNIT PROTEIN UL18M"/>
    <property type="match status" value="1"/>
</dbReference>
<dbReference type="Pfam" id="PF00861">
    <property type="entry name" value="Ribosomal_L18p"/>
    <property type="match status" value="1"/>
</dbReference>
<dbReference type="SUPFAM" id="SSF53137">
    <property type="entry name" value="Translational machinery components"/>
    <property type="match status" value="1"/>
</dbReference>
<reference key="1">
    <citation type="journal article" date="2011" name="J. Bacteriol.">
        <title>Genome sequence of Thermotoga sp. strain RQ2, a hyperthermophilic bacterium isolated from a geothermally heated region of the seafloor near Ribeira Quente, the Azores.</title>
        <authorList>
            <person name="Swithers K.S."/>
            <person name="DiPippo J.L."/>
            <person name="Bruce D.C."/>
            <person name="Detter C."/>
            <person name="Tapia R."/>
            <person name="Han S."/>
            <person name="Saunders E."/>
            <person name="Goodwin L.A."/>
            <person name="Han J."/>
            <person name="Woyke T."/>
            <person name="Pitluck S."/>
            <person name="Pennacchio L."/>
            <person name="Nolan M."/>
            <person name="Mikhailova N."/>
            <person name="Lykidis A."/>
            <person name="Land M.L."/>
            <person name="Brettin T."/>
            <person name="Stetter K.O."/>
            <person name="Nelson K.E."/>
            <person name="Gogarten J.P."/>
            <person name="Noll K.M."/>
        </authorList>
    </citation>
    <scope>NUCLEOTIDE SEQUENCE [LARGE SCALE GENOMIC DNA]</scope>
    <source>
        <strain>RQ2</strain>
    </source>
</reference>
<proteinExistence type="inferred from homology"/>
<gene>
    <name evidence="1" type="primary">rplR</name>
    <name type="ordered locus">TRQ2_1378</name>
</gene>
<sequence length="122" mass="14066">MIKKESKKEQRLRRHRRVRKKVFGTPERPRLCVFRSNKHIYAQIIDDTIGHTLVSASTLDPELREKLQKTWNVEAAKEVGLLIGKRALEKGIKKVVFDRGGYKYHGRVKALADGAREAGLEF</sequence>